<reference key="1">
    <citation type="journal article" date="2009" name="Genome Res.">
        <title>Newly introduced genomic prophage islands are critical determinants of in vivo competitiveness in the Liverpool epidemic strain of Pseudomonas aeruginosa.</title>
        <authorList>
            <person name="Winstanley C."/>
            <person name="Langille M.G.I."/>
            <person name="Fothergill J.L."/>
            <person name="Kukavica-Ibrulj I."/>
            <person name="Paradis-Bleau C."/>
            <person name="Sanschagrin F."/>
            <person name="Thomson N.R."/>
            <person name="Winsor G.L."/>
            <person name="Quail M.A."/>
            <person name="Lennard N."/>
            <person name="Bignell A."/>
            <person name="Clarke L."/>
            <person name="Seeger K."/>
            <person name="Saunders D."/>
            <person name="Harris D."/>
            <person name="Parkhill J."/>
            <person name="Hancock R.E.W."/>
            <person name="Brinkman F.S.L."/>
            <person name="Levesque R.C."/>
        </authorList>
    </citation>
    <scope>NUCLEOTIDE SEQUENCE [LARGE SCALE GENOMIC DNA]</scope>
    <source>
        <strain>LESB58</strain>
    </source>
</reference>
<keyword id="KW-0963">Cytoplasm</keyword>
<keyword id="KW-0251">Elongation factor</keyword>
<keyword id="KW-0648">Protein biosynthesis</keyword>
<accession>B7V9K9</accession>
<gene>
    <name evidence="1" type="primary">efp</name>
    <name type="ordered locus">PLES_22131</name>
</gene>
<sequence>MKTAQEFRAGQVANINGAPWVIQKAEFNKSGRNAAVVKMKLKNLLTGAGTETVFKADDKLEPIILDRKEVTYSYFADPLYVFMDSEFNQYEIEKDDLEGVLTFIEDGMTDICEAVFYNDKVISVELPTTIVRQIAYTEPAVRGDTSGKVMKTARLNNGAELQVSAFCEIGDSIEIDTRTGEYKSRVKA</sequence>
<evidence type="ECO:0000255" key="1">
    <source>
        <dbReference type="HAMAP-Rule" id="MF_00141"/>
    </source>
</evidence>
<protein>
    <recommendedName>
        <fullName evidence="1">Elongation factor P</fullName>
        <shortName evidence="1">EF-P</shortName>
    </recommendedName>
</protein>
<dbReference type="EMBL" id="FM209186">
    <property type="protein sequence ID" value="CAW26940.1"/>
    <property type="molecule type" value="Genomic_DNA"/>
</dbReference>
<dbReference type="RefSeq" id="WP_003090942.1">
    <property type="nucleotide sequence ID" value="NC_011770.1"/>
</dbReference>
<dbReference type="SMR" id="B7V9K9"/>
<dbReference type="GeneID" id="77220646"/>
<dbReference type="KEGG" id="pag:PLES_22131"/>
<dbReference type="HOGENOM" id="CLU_074944_2_1_6"/>
<dbReference type="UniPathway" id="UPA00345"/>
<dbReference type="GO" id="GO:0005737">
    <property type="term" value="C:cytoplasm"/>
    <property type="evidence" value="ECO:0007669"/>
    <property type="project" value="UniProtKB-SubCell"/>
</dbReference>
<dbReference type="GO" id="GO:0003746">
    <property type="term" value="F:translation elongation factor activity"/>
    <property type="evidence" value="ECO:0007669"/>
    <property type="project" value="UniProtKB-UniRule"/>
</dbReference>
<dbReference type="GO" id="GO:0043043">
    <property type="term" value="P:peptide biosynthetic process"/>
    <property type="evidence" value="ECO:0007669"/>
    <property type="project" value="InterPro"/>
</dbReference>
<dbReference type="CDD" id="cd04470">
    <property type="entry name" value="S1_EF-P_repeat_1"/>
    <property type="match status" value="1"/>
</dbReference>
<dbReference type="CDD" id="cd05794">
    <property type="entry name" value="S1_EF-P_repeat_2"/>
    <property type="match status" value="1"/>
</dbReference>
<dbReference type="FunFam" id="2.30.30.30:FF:000003">
    <property type="entry name" value="Elongation factor P"/>
    <property type="match status" value="1"/>
</dbReference>
<dbReference type="FunFam" id="2.40.50.140:FF:000004">
    <property type="entry name" value="Elongation factor P"/>
    <property type="match status" value="1"/>
</dbReference>
<dbReference type="FunFam" id="2.40.50.140:FF:000009">
    <property type="entry name" value="Elongation factor P"/>
    <property type="match status" value="1"/>
</dbReference>
<dbReference type="Gene3D" id="2.30.30.30">
    <property type="match status" value="1"/>
</dbReference>
<dbReference type="Gene3D" id="2.40.50.140">
    <property type="entry name" value="Nucleic acid-binding proteins"/>
    <property type="match status" value="2"/>
</dbReference>
<dbReference type="HAMAP" id="MF_00141">
    <property type="entry name" value="EF_P"/>
    <property type="match status" value="1"/>
</dbReference>
<dbReference type="InterPro" id="IPR015365">
    <property type="entry name" value="Elong-fact-P_C"/>
</dbReference>
<dbReference type="InterPro" id="IPR012340">
    <property type="entry name" value="NA-bd_OB-fold"/>
</dbReference>
<dbReference type="InterPro" id="IPR014722">
    <property type="entry name" value="Rib_uL2_dom2"/>
</dbReference>
<dbReference type="InterPro" id="IPR020599">
    <property type="entry name" value="Transl_elong_fac_P/YeiP"/>
</dbReference>
<dbReference type="InterPro" id="IPR013185">
    <property type="entry name" value="Transl_elong_KOW-like"/>
</dbReference>
<dbReference type="InterPro" id="IPR001059">
    <property type="entry name" value="Transl_elong_P/YeiP_cen"/>
</dbReference>
<dbReference type="InterPro" id="IPR011768">
    <property type="entry name" value="Transl_elongation_fac_P"/>
</dbReference>
<dbReference type="InterPro" id="IPR008991">
    <property type="entry name" value="Translation_prot_SH3-like_sf"/>
</dbReference>
<dbReference type="NCBIfam" id="TIGR00038">
    <property type="entry name" value="efp"/>
    <property type="match status" value="1"/>
</dbReference>
<dbReference type="NCBIfam" id="NF001810">
    <property type="entry name" value="PRK00529.1"/>
    <property type="match status" value="1"/>
</dbReference>
<dbReference type="PANTHER" id="PTHR30053">
    <property type="entry name" value="ELONGATION FACTOR P"/>
    <property type="match status" value="1"/>
</dbReference>
<dbReference type="PANTHER" id="PTHR30053:SF12">
    <property type="entry name" value="ELONGATION FACTOR P (EF-P) FAMILY PROTEIN"/>
    <property type="match status" value="1"/>
</dbReference>
<dbReference type="Pfam" id="PF01132">
    <property type="entry name" value="EFP"/>
    <property type="match status" value="1"/>
</dbReference>
<dbReference type="Pfam" id="PF08207">
    <property type="entry name" value="EFP_N"/>
    <property type="match status" value="1"/>
</dbReference>
<dbReference type="Pfam" id="PF09285">
    <property type="entry name" value="Elong-fact-P_C"/>
    <property type="match status" value="1"/>
</dbReference>
<dbReference type="PIRSF" id="PIRSF005901">
    <property type="entry name" value="EF-P"/>
    <property type="match status" value="1"/>
</dbReference>
<dbReference type="SMART" id="SM01185">
    <property type="entry name" value="EFP"/>
    <property type="match status" value="1"/>
</dbReference>
<dbReference type="SMART" id="SM00841">
    <property type="entry name" value="Elong-fact-P_C"/>
    <property type="match status" value="1"/>
</dbReference>
<dbReference type="SUPFAM" id="SSF50249">
    <property type="entry name" value="Nucleic acid-binding proteins"/>
    <property type="match status" value="2"/>
</dbReference>
<dbReference type="SUPFAM" id="SSF50104">
    <property type="entry name" value="Translation proteins SH3-like domain"/>
    <property type="match status" value="1"/>
</dbReference>
<comment type="function">
    <text evidence="1">Involved in peptide bond synthesis. Stimulates efficient translation and peptide-bond synthesis on native or reconstituted 70S ribosomes in vitro. Probably functions indirectly by altering the affinity of the ribosome for aminoacyl-tRNA, thus increasing their reactivity as acceptors for peptidyl transferase.</text>
</comment>
<comment type="pathway">
    <text evidence="1">Protein biosynthesis; polypeptide chain elongation.</text>
</comment>
<comment type="subcellular location">
    <subcellularLocation>
        <location evidence="1">Cytoplasm</location>
    </subcellularLocation>
</comment>
<comment type="similarity">
    <text evidence="1">Belongs to the elongation factor P family.</text>
</comment>
<feature type="chain" id="PRO_1000117904" description="Elongation factor P">
    <location>
        <begin position="1"/>
        <end position="188"/>
    </location>
</feature>
<proteinExistence type="inferred from homology"/>
<organism>
    <name type="scientific">Pseudomonas aeruginosa (strain LESB58)</name>
    <dbReference type="NCBI Taxonomy" id="557722"/>
    <lineage>
        <taxon>Bacteria</taxon>
        <taxon>Pseudomonadati</taxon>
        <taxon>Pseudomonadota</taxon>
        <taxon>Gammaproteobacteria</taxon>
        <taxon>Pseudomonadales</taxon>
        <taxon>Pseudomonadaceae</taxon>
        <taxon>Pseudomonas</taxon>
    </lineage>
</organism>
<name>EFP_PSEA8</name>